<feature type="signal peptide" evidence="1">
    <location>
        <begin position="1"/>
        <end position="19"/>
    </location>
</feature>
<feature type="propeptide" id="PRO_0000028760" description="Activation peptide" evidence="1">
    <location>
        <begin position="20"/>
        <end position="106"/>
    </location>
</feature>
<feature type="chain" id="PRO_0000028761" description="Matrix metalloproteinase-9">
    <location>
        <begin position="107"/>
        <end position="707"/>
    </location>
</feature>
<feature type="domain" description="Fibronectin type-II 1" evidence="4">
    <location>
        <begin position="225"/>
        <end position="273"/>
    </location>
</feature>
<feature type="domain" description="Fibronectin type-II 2" evidence="4">
    <location>
        <begin position="283"/>
        <end position="331"/>
    </location>
</feature>
<feature type="domain" description="Fibronectin type-II 3" evidence="4">
    <location>
        <begin position="342"/>
        <end position="390"/>
    </location>
</feature>
<feature type="repeat" description="Hemopexin 1">
    <location>
        <begin position="518"/>
        <end position="563"/>
    </location>
</feature>
<feature type="repeat" description="Hemopexin 2">
    <location>
        <begin position="564"/>
        <end position="608"/>
    </location>
</feature>
<feature type="repeat" description="Hemopexin 3">
    <location>
        <begin position="610"/>
        <end position="657"/>
    </location>
</feature>
<feature type="repeat" description="Hemopexin 4">
    <location>
        <begin position="658"/>
        <end position="704"/>
    </location>
</feature>
<feature type="region of interest" description="Disordered" evidence="6">
    <location>
        <begin position="437"/>
        <end position="508"/>
    </location>
</feature>
<feature type="short sequence motif" description="Cysteine switch" evidence="1">
    <location>
        <begin position="97"/>
        <end position="104"/>
    </location>
</feature>
<feature type="compositionally biased region" description="Pro residues" evidence="6">
    <location>
        <begin position="446"/>
        <end position="467"/>
    </location>
</feature>
<feature type="compositionally biased region" description="Low complexity" evidence="6">
    <location>
        <begin position="481"/>
        <end position="493"/>
    </location>
</feature>
<feature type="active site" evidence="5">
    <location>
        <position position="402"/>
    </location>
</feature>
<feature type="binding site" description="in inhibited form" evidence="1">
    <location>
        <position position="99"/>
    </location>
    <ligand>
        <name>Zn(2+)</name>
        <dbReference type="ChEBI" id="CHEBI:29105"/>
        <label>2</label>
        <note>catalytic</note>
    </ligand>
</feature>
<feature type="binding site" evidence="1">
    <location>
        <position position="131"/>
    </location>
    <ligand>
        <name>Ca(2+)</name>
        <dbReference type="ChEBI" id="CHEBI:29108"/>
        <label>1</label>
    </ligand>
</feature>
<feature type="binding site" evidence="1">
    <location>
        <position position="165"/>
    </location>
    <ligand>
        <name>Ca(2+)</name>
        <dbReference type="ChEBI" id="CHEBI:29108"/>
        <label>2</label>
    </ligand>
</feature>
<feature type="binding site" evidence="1">
    <location>
        <position position="175"/>
    </location>
    <ligand>
        <name>Zn(2+)</name>
        <dbReference type="ChEBI" id="CHEBI:29105"/>
        <label>1</label>
        <note>structural</note>
    </ligand>
</feature>
<feature type="binding site" evidence="1">
    <location>
        <position position="177"/>
    </location>
    <ligand>
        <name>Zn(2+)</name>
        <dbReference type="ChEBI" id="CHEBI:29105"/>
        <label>1</label>
        <note>structural</note>
    </ligand>
</feature>
<feature type="binding site" evidence="1">
    <location>
        <position position="182"/>
    </location>
    <ligand>
        <name>Ca(2+)</name>
        <dbReference type="ChEBI" id="CHEBI:29108"/>
        <label>3</label>
    </ligand>
</feature>
<feature type="binding site" evidence="1">
    <location>
        <position position="183"/>
    </location>
    <ligand>
        <name>Ca(2+)</name>
        <dbReference type="ChEBI" id="CHEBI:29108"/>
        <label>3</label>
    </ligand>
</feature>
<feature type="binding site" evidence="1">
    <location>
        <position position="185"/>
    </location>
    <ligand>
        <name>Ca(2+)</name>
        <dbReference type="ChEBI" id="CHEBI:29108"/>
        <label>3</label>
    </ligand>
</feature>
<feature type="binding site" evidence="1">
    <location>
        <position position="187"/>
    </location>
    <ligand>
        <name>Ca(2+)</name>
        <dbReference type="ChEBI" id="CHEBI:29108"/>
        <label>3</label>
    </ligand>
</feature>
<feature type="binding site" evidence="1">
    <location>
        <position position="190"/>
    </location>
    <ligand>
        <name>Zn(2+)</name>
        <dbReference type="ChEBI" id="CHEBI:29105"/>
        <label>1</label>
        <note>structural</note>
    </ligand>
</feature>
<feature type="binding site" evidence="1">
    <location>
        <position position="197"/>
    </location>
    <ligand>
        <name>Ca(2+)</name>
        <dbReference type="ChEBI" id="CHEBI:29108"/>
        <label>2</label>
    </ligand>
</feature>
<feature type="binding site" evidence="1">
    <location>
        <position position="199"/>
    </location>
    <ligand>
        <name>Ca(2+)</name>
        <dbReference type="ChEBI" id="CHEBI:29108"/>
        <label>2</label>
    </ligand>
</feature>
<feature type="binding site" evidence="1">
    <location>
        <position position="201"/>
    </location>
    <ligand>
        <name>Ca(2+)</name>
        <dbReference type="ChEBI" id="CHEBI:29108"/>
        <label>2</label>
    </ligand>
</feature>
<feature type="binding site" evidence="1">
    <location>
        <position position="203"/>
    </location>
    <ligand>
        <name>Zn(2+)</name>
        <dbReference type="ChEBI" id="CHEBI:29105"/>
        <label>1</label>
        <note>structural</note>
    </ligand>
</feature>
<feature type="binding site" evidence="1">
    <location>
        <position position="205"/>
    </location>
    <ligand>
        <name>Ca(2+)</name>
        <dbReference type="ChEBI" id="CHEBI:29108"/>
        <label>3</label>
    </ligand>
</feature>
<feature type="binding site" evidence="1">
    <location>
        <position position="206"/>
    </location>
    <ligand>
        <name>Ca(2+)</name>
        <dbReference type="ChEBI" id="CHEBI:29108"/>
        <label>1</label>
    </ligand>
</feature>
<feature type="binding site" evidence="1">
    <location>
        <position position="208"/>
    </location>
    <ligand>
        <name>Ca(2+)</name>
        <dbReference type="ChEBI" id="CHEBI:29108"/>
        <label>1</label>
    </ligand>
</feature>
<feature type="binding site" evidence="1">
    <location>
        <position position="208"/>
    </location>
    <ligand>
        <name>Ca(2+)</name>
        <dbReference type="ChEBI" id="CHEBI:29108"/>
        <label>3</label>
    </ligand>
</feature>
<feature type="binding site" evidence="1">
    <location>
        <position position="401"/>
    </location>
    <ligand>
        <name>Zn(2+)</name>
        <dbReference type="ChEBI" id="CHEBI:29105"/>
        <label>2</label>
        <note>catalytic</note>
    </ligand>
</feature>
<feature type="binding site" evidence="1">
    <location>
        <position position="405"/>
    </location>
    <ligand>
        <name>Zn(2+)</name>
        <dbReference type="ChEBI" id="CHEBI:29105"/>
        <label>2</label>
        <note>catalytic</note>
    </ligand>
</feature>
<feature type="binding site" evidence="1">
    <location>
        <position position="411"/>
    </location>
    <ligand>
        <name>Zn(2+)</name>
        <dbReference type="ChEBI" id="CHEBI:29105"/>
        <label>2</label>
        <note>catalytic</note>
    </ligand>
</feature>
<feature type="glycosylation site" description="N-linked (GlcNAc...) asparagine" evidence="3">
    <location>
        <position position="88"/>
    </location>
</feature>
<feature type="glycosylation site" description="N-linked (GlcNAc...) asparagine" evidence="3">
    <location>
        <position position="120"/>
    </location>
</feature>
<feature type="glycosylation site" description="N-linked (GlcNAc...) asparagine" evidence="3">
    <location>
        <position position="127"/>
    </location>
</feature>
<feature type="disulfide bond" evidence="4">
    <location>
        <begin position="230"/>
        <end position="256"/>
    </location>
</feature>
<feature type="disulfide bond" evidence="4">
    <location>
        <begin position="244"/>
        <end position="271"/>
    </location>
</feature>
<feature type="disulfide bond" evidence="4">
    <location>
        <begin position="288"/>
        <end position="314"/>
    </location>
</feature>
<feature type="disulfide bond" evidence="4">
    <location>
        <begin position="302"/>
        <end position="329"/>
    </location>
</feature>
<feature type="disulfide bond" evidence="4">
    <location>
        <begin position="347"/>
        <end position="373"/>
    </location>
</feature>
<feature type="disulfide bond" evidence="4">
    <location>
        <begin position="361"/>
        <end position="388"/>
    </location>
</feature>
<feature type="disulfide bond" evidence="4">
    <location>
        <begin position="516"/>
        <end position="704"/>
    </location>
</feature>
<feature type="sequence conflict" description="In Ref. 2; AAA64358." evidence="9" ref="2">
    <original>K</original>
    <variation>P</variation>
    <location>
        <position position="76"/>
    </location>
</feature>
<feature type="sequence conflict" description="In Ref. 2; AAA64358." evidence="9" ref="2">
    <original>GVP</original>
    <variation>ASR</variation>
    <location>
        <begin position="100"/>
        <end position="102"/>
    </location>
</feature>
<evidence type="ECO:0000250" key="1">
    <source>
        <dbReference type="UniProtKB" id="P14780"/>
    </source>
</evidence>
<evidence type="ECO:0000250" key="2">
    <source>
        <dbReference type="UniProtKB" id="P41245"/>
    </source>
</evidence>
<evidence type="ECO:0000255" key="3"/>
<evidence type="ECO:0000255" key="4">
    <source>
        <dbReference type="PROSITE-ProRule" id="PRU00479"/>
    </source>
</evidence>
<evidence type="ECO:0000255" key="5">
    <source>
        <dbReference type="PROSITE-ProRule" id="PRU10095"/>
    </source>
</evidence>
<evidence type="ECO:0000256" key="6">
    <source>
        <dbReference type="SAM" id="MobiDB-lite"/>
    </source>
</evidence>
<evidence type="ECO:0000269" key="7">
    <source>
    </source>
</evidence>
<evidence type="ECO:0000303" key="8">
    <source>
    </source>
</evidence>
<evidence type="ECO:0000305" key="9"/>
<name>MMP9_RABIT</name>
<dbReference type="EC" id="3.4.24.35" evidence="1"/>
<dbReference type="EMBL" id="D26514">
    <property type="protein sequence ID" value="BAA05520.1"/>
    <property type="molecule type" value="mRNA"/>
</dbReference>
<dbReference type="EMBL" id="L36050">
    <property type="protein sequence ID" value="AAA64358.1"/>
    <property type="molecule type" value="Genomic_DNA"/>
</dbReference>
<dbReference type="PIR" id="A53796">
    <property type="entry name" value="A53796"/>
</dbReference>
<dbReference type="RefSeq" id="NP_001075672.1">
    <property type="nucleotide sequence ID" value="NM_001082203.1"/>
</dbReference>
<dbReference type="SMR" id="P41246"/>
<dbReference type="FunCoup" id="P41246">
    <property type="interactions" value="42"/>
</dbReference>
<dbReference type="STRING" id="9986.ENSOCUP00000025066"/>
<dbReference type="MEROPS" id="M10.004"/>
<dbReference type="GlyCosmos" id="P41246">
    <property type="glycosylation" value="3 sites, No reported glycans"/>
</dbReference>
<dbReference type="PaxDb" id="9986-ENSOCUP00000025066"/>
<dbReference type="GeneID" id="100008993"/>
<dbReference type="KEGG" id="ocu:100008993"/>
<dbReference type="CTD" id="4318"/>
<dbReference type="eggNOG" id="KOG1565">
    <property type="taxonomic scope" value="Eukaryota"/>
</dbReference>
<dbReference type="InParanoid" id="P41246"/>
<dbReference type="OrthoDB" id="406838at2759"/>
<dbReference type="Proteomes" id="UP000001811">
    <property type="component" value="Unplaced"/>
</dbReference>
<dbReference type="GO" id="GO:0031012">
    <property type="term" value="C:extracellular matrix"/>
    <property type="evidence" value="ECO:0007669"/>
    <property type="project" value="InterPro"/>
</dbReference>
<dbReference type="GO" id="GO:0005615">
    <property type="term" value="C:extracellular space"/>
    <property type="evidence" value="ECO:0000250"/>
    <property type="project" value="UniProtKB"/>
</dbReference>
<dbReference type="GO" id="GO:0004222">
    <property type="term" value="F:metalloendopeptidase activity"/>
    <property type="evidence" value="ECO:0000250"/>
    <property type="project" value="UniProtKB"/>
</dbReference>
<dbReference type="GO" id="GO:0008233">
    <property type="term" value="F:peptidase activity"/>
    <property type="evidence" value="ECO:0000250"/>
    <property type="project" value="UniProtKB"/>
</dbReference>
<dbReference type="GO" id="GO:0008270">
    <property type="term" value="F:zinc ion binding"/>
    <property type="evidence" value="ECO:0007669"/>
    <property type="project" value="InterPro"/>
</dbReference>
<dbReference type="GO" id="GO:0030574">
    <property type="term" value="P:collagen catabolic process"/>
    <property type="evidence" value="ECO:0007669"/>
    <property type="project" value="UniProtKB-KW"/>
</dbReference>
<dbReference type="GO" id="GO:0030198">
    <property type="term" value="P:extracellular matrix organization"/>
    <property type="evidence" value="ECO:0007669"/>
    <property type="project" value="TreeGrafter"/>
</dbReference>
<dbReference type="GO" id="GO:0006508">
    <property type="term" value="P:proteolysis"/>
    <property type="evidence" value="ECO:0000250"/>
    <property type="project" value="UniProtKB"/>
</dbReference>
<dbReference type="CDD" id="cd00062">
    <property type="entry name" value="FN2"/>
    <property type="match status" value="3"/>
</dbReference>
<dbReference type="CDD" id="cd00094">
    <property type="entry name" value="HX"/>
    <property type="match status" value="1"/>
</dbReference>
<dbReference type="CDD" id="cd04278">
    <property type="entry name" value="ZnMc_MMP"/>
    <property type="match status" value="1"/>
</dbReference>
<dbReference type="FunFam" id="3.40.390.10:FF:000010">
    <property type="entry name" value="72 kDa type IV collagenase"/>
    <property type="match status" value="1"/>
</dbReference>
<dbReference type="FunFam" id="2.10.10.10:FF:000001">
    <property type="entry name" value="Fibronectin 1a isoform 1"/>
    <property type="match status" value="3"/>
</dbReference>
<dbReference type="FunFam" id="2.110.10.10:FF:000011">
    <property type="entry name" value="Matrix metalloproteinase-9"/>
    <property type="match status" value="1"/>
</dbReference>
<dbReference type="Gene3D" id="3.40.390.10">
    <property type="entry name" value="Collagenase (Catalytic Domain)"/>
    <property type="match status" value="1"/>
</dbReference>
<dbReference type="Gene3D" id="2.10.10.10">
    <property type="entry name" value="Fibronectin, type II, collagen-binding"/>
    <property type="match status" value="3"/>
</dbReference>
<dbReference type="Gene3D" id="2.110.10.10">
    <property type="entry name" value="Hemopexin-like domain"/>
    <property type="match status" value="1"/>
</dbReference>
<dbReference type="InterPro" id="IPR000562">
    <property type="entry name" value="FN_type2_dom"/>
</dbReference>
<dbReference type="InterPro" id="IPR036943">
    <property type="entry name" value="FN_type2_sf"/>
</dbReference>
<dbReference type="InterPro" id="IPR000585">
    <property type="entry name" value="Hemopexin-like_dom"/>
</dbReference>
<dbReference type="InterPro" id="IPR036375">
    <property type="entry name" value="Hemopexin-like_dom_sf"/>
</dbReference>
<dbReference type="InterPro" id="IPR018487">
    <property type="entry name" value="Hemopexin-like_repeat"/>
</dbReference>
<dbReference type="InterPro" id="IPR018486">
    <property type="entry name" value="Hemopexin_CS"/>
</dbReference>
<dbReference type="InterPro" id="IPR013806">
    <property type="entry name" value="Kringle-like"/>
</dbReference>
<dbReference type="InterPro" id="IPR033739">
    <property type="entry name" value="M10A_MMP"/>
</dbReference>
<dbReference type="InterPro" id="IPR024079">
    <property type="entry name" value="MetalloPept_cat_dom_sf"/>
</dbReference>
<dbReference type="InterPro" id="IPR001818">
    <property type="entry name" value="Pept_M10_metallopeptidase"/>
</dbReference>
<dbReference type="InterPro" id="IPR021190">
    <property type="entry name" value="Pept_M10A"/>
</dbReference>
<dbReference type="InterPro" id="IPR021158">
    <property type="entry name" value="Pept_M10A_Zn_BS"/>
</dbReference>
<dbReference type="InterPro" id="IPR006026">
    <property type="entry name" value="Peptidase_Metallo"/>
</dbReference>
<dbReference type="InterPro" id="IPR036365">
    <property type="entry name" value="PGBD-like_sf"/>
</dbReference>
<dbReference type="InterPro" id="IPR006970">
    <property type="entry name" value="PT"/>
</dbReference>
<dbReference type="PANTHER" id="PTHR10201">
    <property type="entry name" value="MATRIX METALLOPROTEINASE"/>
    <property type="match status" value="1"/>
</dbReference>
<dbReference type="PANTHER" id="PTHR10201:SF30">
    <property type="entry name" value="MATRIX METALLOPROTEINASE-9"/>
    <property type="match status" value="1"/>
</dbReference>
<dbReference type="Pfam" id="PF00040">
    <property type="entry name" value="fn2"/>
    <property type="match status" value="3"/>
</dbReference>
<dbReference type="Pfam" id="PF00045">
    <property type="entry name" value="Hemopexin"/>
    <property type="match status" value="3"/>
</dbReference>
<dbReference type="Pfam" id="PF00413">
    <property type="entry name" value="Peptidase_M10"/>
    <property type="match status" value="2"/>
</dbReference>
<dbReference type="Pfam" id="PF04886">
    <property type="entry name" value="PT"/>
    <property type="match status" value="1"/>
</dbReference>
<dbReference type="PIRSF" id="PIRSF001191">
    <property type="entry name" value="Peptidase_M10A_matrix"/>
    <property type="match status" value="1"/>
</dbReference>
<dbReference type="PRINTS" id="PR00013">
    <property type="entry name" value="FNTYPEII"/>
</dbReference>
<dbReference type="PRINTS" id="PR00138">
    <property type="entry name" value="MATRIXIN"/>
</dbReference>
<dbReference type="SMART" id="SM00059">
    <property type="entry name" value="FN2"/>
    <property type="match status" value="3"/>
</dbReference>
<dbReference type="SMART" id="SM00120">
    <property type="entry name" value="HX"/>
    <property type="match status" value="4"/>
</dbReference>
<dbReference type="SMART" id="SM00235">
    <property type="entry name" value="ZnMc"/>
    <property type="match status" value="1"/>
</dbReference>
<dbReference type="SUPFAM" id="SSF50923">
    <property type="entry name" value="Hemopexin-like domain"/>
    <property type="match status" value="1"/>
</dbReference>
<dbReference type="SUPFAM" id="SSF57440">
    <property type="entry name" value="Kringle-like"/>
    <property type="match status" value="3"/>
</dbReference>
<dbReference type="SUPFAM" id="SSF55486">
    <property type="entry name" value="Metalloproteases ('zincins'), catalytic domain"/>
    <property type="match status" value="1"/>
</dbReference>
<dbReference type="SUPFAM" id="SSF47090">
    <property type="entry name" value="PGBD-like"/>
    <property type="match status" value="1"/>
</dbReference>
<dbReference type="PROSITE" id="PS00546">
    <property type="entry name" value="CYSTEINE_SWITCH"/>
    <property type="match status" value="1"/>
</dbReference>
<dbReference type="PROSITE" id="PS00023">
    <property type="entry name" value="FN2_1"/>
    <property type="match status" value="3"/>
</dbReference>
<dbReference type="PROSITE" id="PS51092">
    <property type="entry name" value="FN2_2"/>
    <property type="match status" value="3"/>
</dbReference>
<dbReference type="PROSITE" id="PS00024">
    <property type="entry name" value="HEMOPEXIN"/>
    <property type="match status" value="1"/>
</dbReference>
<dbReference type="PROSITE" id="PS51642">
    <property type="entry name" value="HEMOPEXIN_2"/>
    <property type="match status" value="4"/>
</dbReference>
<dbReference type="PROSITE" id="PS00142">
    <property type="entry name" value="ZINC_PROTEASE"/>
    <property type="match status" value="1"/>
</dbReference>
<accession>P41246</accession>
<keyword id="KW-0106">Calcium</keyword>
<keyword id="KW-0177">Collagen degradation</keyword>
<keyword id="KW-1015">Disulfide bond</keyword>
<keyword id="KW-0272">Extracellular matrix</keyword>
<keyword id="KW-0325">Glycoprotein</keyword>
<keyword id="KW-0378">Hydrolase</keyword>
<keyword id="KW-0479">Metal-binding</keyword>
<keyword id="KW-0482">Metalloprotease</keyword>
<keyword id="KW-0645">Protease</keyword>
<keyword id="KW-1185">Reference proteome</keyword>
<keyword id="KW-0677">Repeat</keyword>
<keyword id="KW-0964">Secreted</keyword>
<keyword id="KW-0732">Signal</keyword>
<keyword id="KW-0862">Zinc</keyword>
<keyword id="KW-0865">Zymogen</keyword>
<organism>
    <name type="scientific">Oryctolagus cuniculus</name>
    <name type="common">Rabbit</name>
    <dbReference type="NCBI Taxonomy" id="9986"/>
    <lineage>
        <taxon>Eukaryota</taxon>
        <taxon>Metazoa</taxon>
        <taxon>Chordata</taxon>
        <taxon>Craniata</taxon>
        <taxon>Vertebrata</taxon>
        <taxon>Euteleostomi</taxon>
        <taxon>Mammalia</taxon>
        <taxon>Eutheria</taxon>
        <taxon>Euarchontoglires</taxon>
        <taxon>Glires</taxon>
        <taxon>Lagomorpha</taxon>
        <taxon>Leporidae</taxon>
        <taxon>Oryctolagus</taxon>
    </lineage>
</organism>
<comment type="function">
    <text evidence="1 2">Matrix metalloproteinase that plays an essential role in local proteolysis of the extracellular matrix and in leukocyte migration (By similarity). Could play a role in bone osteoclastic resorption (By similarity). Cleaves KiSS1 at a Gly-|-Leu bond (By similarity). Cleaves NINJ1 to generate the Secreted ninjurin-1 form (By similarity). Cleaves type IV and type V collagen into large C-terminal three quarter fragments and shorter N-terminal one quarter fragments. Degrades fibronectin but not laminin or Pz-peptide (By similarity).</text>
</comment>
<comment type="catalytic activity">
    <reaction evidence="1">
        <text>Cleavage of gelatin types I and V and collagen types IV and V.</text>
        <dbReference type="EC" id="3.4.24.35"/>
    </reaction>
</comment>
<comment type="cofactor">
    <cofactor evidence="1">
        <name>Zn(2+)</name>
        <dbReference type="ChEBI" id="CHEBI:29105"/>
    </cofactor>
    <text evidence="1">Binds 2 Zn(2+) ions per subunit.</text>
</comment>
<comment type="cofactor">
    <cofactor evidence="1">
        <name>Ca(2+)</name>
        <dbReference type="ChEBI" id="CHEBI:29108"/>
    </cofactor>
    <text evidence="1">Binds 3 Ca(2+) ions per subunit.</text>
</comment>
<comment type="subunit">
    <text evidence="1">Exists as monomer or homodimer; disulfide-linked. Also exists as heterodimer with LCN2. Macrophages and transformed cell lines produce only the monomeric form. Interacts with ECM1.</text>
</comment>
<comment type="subcellular location">
    <subcellularLocation>
        <location evidence="1">Secreted</location>
        <location evidence="1">Extracellular space</location>
        <location evidence="1">Extracellular matrix</location>
    </subcellularLocation>
</comment>
<comment type="tissue specificity">
    <text evidence="7">Osteoclasts.</text>
</comment>
<comment type="domain">
    <text evidence="1">The conserved cysteine present in the cysteine-switch motif binds the catalytic zinc ion, thus inhibiting the enzyme. The dissociation of the cysteine from the zinc ion upon the activation-peptide release activates the enzyme.</text>
</comment>
<comment type="PTM">
    <text evidence="1">N- and O-glycosylated.</text>
</comment>
<comment type="similarity">
    <text evidence="9">Belongs to the peptidase M10A family.</text>
</comment>
<proteinExistence type="evidence at transcript level"/>
<sequence>MSPRQPLVLALLVLGCCSAAPRRRQPTLVVFPGELRTRLTDRQLAEEYLFRYGYTRVASMHGDSQSLRLPLLLLQKHLSLPETGELDNATLEAMRAPRCGVPDVGKFQTFEGDLKWHHHNITYWIQNYSEDLPRDVIDDAFARAFALWSAVTPLTFTRVYSRDADIVIQFGVAEHGDGYPFDGKDGLLAHAFPPGPGIQGDAHFDDEELWSLGKGVVVPTYFGNADGAPCHFPFTFEGRSYTACTTDGRSDGMAWCSTTADYDTDRRFGFCPSERLYTQDGNADGKPCEFPFIFQGRTYSACTTDGRSDGHRWCATTASYDKDKLYGFCPTRADSTVVGGNSAGELCVFPFVFLGKEYSSCTSEGRRDGRLWCATTSNFDSDKKWGFCPDKGYSLFLVAAHEFGHALGLDHSSVPERLMYPMYRYLEGSPLHEDDVRGIQHLYGPNPNPQPPATTTPEPQPTAPPTACPTWPATVRPSEHPTTSPTGAPSAGPTGPPTASPSAAPTASLDPAEDVCNVNVFDAIAEIGNKLHVFKDGRYWRFSEGSGRRPQGPFLIADTWPALPAKLDSAFEEPLTKKLFFFSGRQVWVYTGASVLGPRRLDKLGLGPEVPHVTGALPRAGGKVLLFGAQRFWRFDVKTQTVDSRSGAPVDQMFPGVPLNTHDVFQYREKAYFCQDRFFWRVSTRNEVNLVDQVGYVSFDILHCPED</sequence>
<gene>
    <name evidence="8" type="primary">MMP9</name>
</gene>
<reference key="1">
    <citation type="journal article" date="1994" name="J. Biol. Chem.">
        <title>Identification of matrix metalloproteinase 9 in rabbit osteoclasts.</title>
        <authorList>
            <person name="Tezuka K.I."/>
            <person name="Nemoto K."/>
            <person name="Tezuka Y."/>
            <person name="Sato T."/>
            <person name="Ikeda Y."/>
            <person name="Kobori M."/>
            <person name="Kawashima H."/>
            <person name="Eguchi H."/>
            <person name="Hakeda Y."/>
            <person name="Kumegawa M."/>
        </authorList>
    </citation>
    <scope>NUCLEOTIDE SEQUENCE [MRNA]</scope>
    <source>
        <strain>Japanese white</strain>
        <tissue>Bone</tissue>
    </source>
</reference>
<reference key="2">
    <citation type="journal article" date="1994" name="J. Biol. Chem.">
        <title>The rabbit gene for 92-kDa matrix metalloproteinase. Role of AP1 and AP2 in cell type-specific transcription.</title>
        <authorList>
            <person name="Fini M.E."/>
            <person name="Bartlett J.D."/>
            <person name="Matsubara M."/>
            <person name="Rinehart W.B."/>
            <person name="Mody M.K."/>
            <person name="Girard M.T."/>
            <person name="Rainville M."/>
        </authorList>
    </citation>
    <scope>NUCLEOTIDE SEQUENCE [GENOMIC DNA] OF 1-171</scope>
    <source>
        <strain>New Zealand white</strain>
        <tissue>Liver</tissue>
    </source>
</reference>
<protein>
    <recommendedName>
        <fullName evidence="8">Matrix metalloproteinase-9</fullName>
        <shortName evidence="8">MMP-9</shortName>
        <ecNumber evidence="1">3.4.24.35</ecNumber>
    </recommendedName>
    <alternativeName>
        <fullName>92 kDa gelatinase</fullName>
    </alternativeName>
    <alternativeName>
        <fullName>92 kDa type IV collagenase</fullName>
    </alternativeName>
    <alternativeName>
        <fullName>Gelatinase B</fullName>
        <shortName>GELB</shortName>
    </alternativeName>
</protein>